<keyword id="KW-0488">Methylation</keyword>
<keyword id="KW-1185">Reference proteome</keyword>
<keyword id="KW-0687">Ribonucleoprotein</keyword>
<keyword id="KW-0689">Ribosomal protein</keyword>
<keyword id="KW-0694">RNA-binding</keyword>
<keyword id="KW-0699">rRNA-binding</keyword>
<protein>
    <recommendedName>
        <fullName evidence="1">Large ribosomal subunit protein uL11</fullName>
    </recommendedName>
    <alternativeName>
        <fullName evidence="2">50S ribosomal protein L11</fullName>
    </alternativeName>
</protein>
<evidence type="ECO:0000255" key="1">
    <source>
        <dbReference type="HAMAP-Rule" id="MF_00736"/>
    </source>
</evidence>
<evidence type="ECO:0000305" key="2"/>
<comment type="function">
    <text evidence="1">Forms part of the ribosomal stalk which helps the ribosome interact with GTP-bound translation factors.</text>
</comment>
<comment type="subunit">
    <text evidence="1">Part of the ribosomal stalk of the 50S ribosomal subunit. Interacts with L10 and the large rRNA to form the base of the stalk. L10 forms an elongated spine to which L12 dimers bind in a sequential fashion forming a multimeric L10(L12)X complex.</text>
</comment>
<comment type="PTM">
    <text evidence="1">One or more lysine residues are methylated.</text>
</comment>
<comment type="similarity">
    <text evidence="1">Belongs to the universal ribosomal protein uL11 family.</text>
</comment>
<reference key="1">
    <citation type="journal article" date="2008" name="J. Bacteriol.">
        <title>Insights into plant cell wall degradation from the genome sequence of the soil bacterium Cellvibrio japonicus.</title>
        <authorList>
            <person name="DeBoy R.T."/>
            <person name="Mongodin E.F."/>
            <person name="Fouts D.E."/>
            <person name="Tailford L.E."/>
            <person name="Khouri H."/>
            <person name="Emerson J.B."/>
            <person name="Mohamoud Y."/>
            <person name="Watkins K."/>
            <person name="Henrissat B."/>
            <person name="Gilbert H.J."/>
            <person name="Nelson K.E."/>
        </authorList>
    </citation>
    <scope>NUCLEOTIDE SEQUENCE [LARGE SCALE GENOMIC DNA]</scope>
    <source>
        <strain>Ueda107</strain>
    </source>
</reference>
<organism>
    <name type="scientific">Cellvibrio japonicus (strain Ueda107)</name>
    <name type="common">Pseudomonas fluorescens subsp. cellulosa</name>
    <dbReference type="NCBI Taxonomy" id="498211"/>
    <lineage>
        <taxon>Bacteria</taxon>
        <taxon>Pseudomonadati</taxon>
        <taxon>Pseudomonadota</taxon>
        <taxon>Gammaproteobacteria</taxon>
        <taxon>Cellvibrionales</taxon>
        <taxon>Cellvibrionaceae</taxon>
        <taxon>Cellvibrio</taxon>
    </lineage>
</organism>
<dbReference type="EMBL" id="CP000934">
    <property type="protein sequence ID" value="ACE85934.1"/>
    <property type="molecule type" value="Genomic_DNA"/>
</dbReference>
<dbReference type="RefSeq" id="WP_012486353.1">
    <property type="nucleotide sequence ID" value="NC_010995.1"/>
</dbReference>
<dbReference type="SMR" id="B3PK26"/>
<dbReference type="STRING" id="498211.CJA_0688"/>
<dbReference type="KEGG" id="cja:CJA_0688"/>
<dbReference type="eggNOG" id="COG0080">
    <property type="taxonomic scope" value="Bacteria"/>
</dbReference>
<dbReference type="HOGENOM" id="CLU_074237_2_0_6"/>
<dbReference type="OrthoDB" id="9802408at2"/>
<dbReference type="Proteomes" id="UP000001036">
    <property type="component" value="Chromosome"/>
</dbReference>
<dbReference type="GO" id="GO:0022625">
    <property type="term" value="C:cytosolic large ribosomal subunit"/>
    <property type="evidence" value="ECO:0007669"/>
    <property type="project" value="TreeGrafter"/>
</dbReference>
<dbReference type="GO" id="GO:0070180">
    <property type="term" value="F:large ribosomal subunit rRNA binding"/>
    <property type="evidence" value="ECO:0007669"/>
    <property type="project" value="UniProtKB-UniRule"/>
</dbReference>
<dbReference type="GO" id="GO:0003735">
    <property type="term" value="F:structural constituent of ribosome"/>
    <property type="evidence" value="ECO:0007669"/>
    <property type="project" value="InterPro"/>
</dbReference>
<dbReference type="GO" id="GO:0006412">
    <property type="term" value="P:translation"/>
    <property type="evidence" value="ECO:0007669"/>
    <property type="project" value="UniProtKB-UniRule"/>
</dbReference>
<dbReference type="CDD" id="cd00349">
    <property type="entry name" value="Ribosomal_L11"/>
    <property type="match status" value="1"/>
</dbReference>
<dbReference type="FunFam" id="1.10.10.250:FF:000001">
    <property type="entry name" value="50S ribosomal protein L11"/>
    <property type="match status" value="1"/>
</dbReference>
<dbReference type="FunFam" id="3.30.1550.10:FF:000001">
    <property type="entry name" value="50S ribosomal protein L11"/>
    <property type="match status" value="1"/>
</dbReference>
<dbReference type="Gene3D" id="1.10.10.250">
    <property type="entry name" value="Ribosomal protein L11, C-terminal domain"/>
    <property type="match status" value="1"/>
</dbReference>
<dbReference type="Gene3D" id="3.30.1550.10">
    <property type="entry name" value="Ribosomal protein L11/L12, N-terminal domain"/>
    <property type="match status" value="1"/>
</dbReference>
<dbReference type="HAMAP" id="MF_00736">
    <property type="entry name" value="Ribosomal_uL11"/>
    <property type="match status" value="1"/>
</dbReference>
<dbReference type="InterPro" id="IPR000911">
    <property type="entry name" value="Ribosomal_uL11"/>
</dbReference>
<dbReference type="InterPro" id="IPR006519">
    <property type="entry name" value="Ribosomal_uL11_bac-typ"/>
</dbReference>
<dbReference type="InterPro" id="IPR020783">
    <property type="entry name" value="Ribosomal_uL11_C"/>
</dbReference>
<dbReference type="InterPro" id="IPR036769">
    <property type="entry name" value="Ribosomal_uL11_C_sf"/>
</dbReference>
<dbReference type="InterPro" id="IPR020785">
    <property type="entry name" value="Ribosomal_uL11_CS"/>
</dbReference>
<dbReference type="InterPro" id="IPR020784">
    <property type="entry name" value="Ribosomal_uL11_N"/>
</dbReference>
<dbReference type="InterPro" id="IPR036796">
    <property type="entry name" value="Ribosomal_uL11_N_sf"/>
</dbReference>
<dbReference type="NCBIfam" id="TIGR01632">
    <property type="entry name" value="L11_bact"/>
    <property type="match status" value="1"/>
</dbReference>
<dbReference type="PANTHER" id="PTHR11661">
    <property type="entry name" value="60S RIBOSOMAL PROTEIN L12"/>
    <property type="match status" value="1"/>
</dbReference>
<dbReference type="PANTHER" id="PTHR11661:SF1">
    <property type="entry name" value="LARGE RIBOSOMAL SUBUNIT PROTEIN UL11M"/>
    <property type="match status" value="1"/>
</dbReference>
<dbReference type="Pfam" id="PF00298">
    <property type="entry name" value="Ribosomal_L11"/>
    <property type="match status" value="1"/>
</dbReference>
<dbReference type="Pfam" id="PF03946">
    <property type="entry name" value="Ribosomal_L11_N"/>
    <property type="match status" value="1"/>
</dbReference>
<dbReference type="SMART" id="SM00649">
    <property type="entry name" value="RL11"/>
    <property type="match status" value="1"/>
</dbReference>
<dbReference type="SUPFAM" id="SSF54747">
    <property type="entry name" value="Ribosomal L11/L12e N-terminal domain"/>
    <property type="match status" value="1"/>
</dbReference>
<dbReference type="SUPFAM" id="SSF46906">
    <property type="entry name" value="Ribosomal protein L11, C-terminal domain"/>
    <property type="match status" value="1"/>
</dbReference>
<dbReference type="PROSITE" id="PS00359">
    <property type="entry name" value="RIBOSOMAL_L11"/>
    <property type="match status" value="1"/>
</dbReference>
<proteinExistence type="inferred from homology"/>
<gene>
    <name evidence="1" type="primary">rplK</name>
    <name type="ordered locus">CJA_0688</name>
</gene>
<accession>B3PK26</accession>
<sequence>MAKKVTAYVKLQVAAGKANPSPPVGPALGQHGVNIMEFCKAFNAQTQGMEVGAPVPVIISVYSDRSFTFVMKTPPASFLLKKAAGITSGSGRPNTNKVGKVNRAQLEAIATTKLPDLTAADMDAAVRTIAGSARSMGLDVEGV</sequence>
<name>RL11_CELJU</name>
<feature type="chain" id="PRO_1000132877" description="Large ribosomal subunit protein uL11">
    <location>
        <begin position="1"/>
        <end position="143"/>
    </location>
</feature>